<gene>
    <name evidence="1" type="primary">matK</name>
    <name type="synonym">ycf14</name>
</gene>
<feature type="chain" id="PRO_0000143699" description="Maturase K">
    <location>
        <begin position="1"/>
        <end position="505"/>
    </location>
</feature>
<organism>
    <name type="scientific">Micranthes integrifolia</name>
    <name type="common">Wholeleaf saxifrage</name>
    <name type="synonym">Saxifraga integrifolia</name>
    <dbReference type="NCBI Taxonomy" id="3799"/>
    <lineage>
        <taxon>Eukaryota</taxon>
        <taxon>Viridiplantae</taxon>
        <taxon>Streptophyta</taxon>
        <taxon>Embryophyta</taxon>
        <taxon>Tracheophyta</taxon>
        <taxon>Spermatophyta</taxon>
        <taxon>Magnoliopsida</taxon>
        <taxon>eudicotyledons</taxon>
        <taxon>Gunneridae</taxon>
        <taxon>Pentapetalae</taxon>
        <taxon>Saxifragales</taxon>
        <taxon>Saxifragaceae</taxon>
        <taxon>Micrantheae</taxon>
        <taxon>Micranthes</taxon>
    </lineage>
</organism>
<reference key="1">
    <citation type="journal article" date="1994" name="Syst. Bot.">
        <title>matK DNA sequences and phylogenetic reconstruction in Saxifragaceae sensu stricto.</title>
        <authorList>
            <person name="Johnson L.A."/>
            <person name="Soltis D.E."/>
        </authorList>
        <dbReference type="AGRICOLA" id="IND20396215"/>
    </citation>
    <scope>NUCLEOTIDE SEQUENCE [GENOMIC DNA]</scope>
    <source>
        <tissue>Leaf</tissue>
    </source>
</reference>
<name>MATK_MICIN</name>
<evidence type="ECO:0000255" key="1">
    <source>
        <dbReference type="HAMAP-Rule" id="MF_01390"/>
    </source>
</evidence>
<geneLocation type="chloroplast"/>
<protein>
    <recommendedName>
        <fullName evidence="1">Maturase K</fullName>
    </recommendedName>
    <alternativeName>
        <fullName evidence="1">Intron maturase</fullName>
    </alternativeName>
</protein>
<keyword id="KW-0150">Chloroplast</keyword>
<keyword id="KW-0507">mRNA processing</keyword>
<keyword id="KW-0934">Plastid</keyword>
<keyword id="KW-0694">RNA-binding</keyword>
<keyword id="KW-0819">tRNA processing</keyword>
<accession>P36435</accession>
<proteinExistence type="inferred from homology"/>
<comment type="function">
    <text evidence="1">Usually encoded in the trnK tRNA gene intron. Probably assists in splicing its own and other chloroplast group II introns.</text>
</comment>
<comment type="subcellular location">
    <subcellularLocation>
        <location>Plastid</location>
        <location>Chloroplast</location>
    </subcellularLocation>
</comment>
<comment type="similarity">
    <text evidence="1">Belongs to the intron maturase 2 family. MatK subfamily.</text>
</comment>
<dbReference type="EMBL" id="L20131">
    <property type="protein sequence ID" value="AAA84600.1"/>
    <property type="molecule type" value="Genomic_DNA"/>
</dbReference>
<dbReference type="GO" id="GO:0009507">
    <property type="term" value="C:chloroplast"/>
    <property type="evidence" value="ECO:0007669"/>
    <property type="project" value="UniProtKB-SubCell"/>
</dbReference>
<dbReference type="GO" id="GO:0003723">
    <property type="term" value="F:RNA binding"/>
    <property type="evidence" value="ECO:0007669"/>
    <property type="project" value="UniProtKB-KW"/>
</dbReference>
<dbReference type="GO" id="GO:0006397">
    <property type="term" value="P:mRNA processing"/>
    <property type="evidence" value="ECO:0007669"/>
    <property type="project" value="UniProtKB-KW"/>
</dbReference>
<dbReference type="GO" id="GO:0008380">
    <property type="term" value="P:RNA splicing"/>
    <property type="evidence" value="ECO:0007669"/>
    <property type="project" value="UniProtKB-UniRule"/>
</dbReference>
<dbReference type="GO" id="GO:0008033">
    <property type="term" value="P:tRNA processing"/>
    <property type="evidence" value="ECO:0007669"/>
    <property type="project" value="UniProtKB-KW"/>
</dbReference>
<dbReference type="HAMAP" id="MF_01390">
    <property type="entry name" value="MatK"/>
    <property type="match status" value="1"/>
</dbReference>
<dbReference type="InterPro" id="IPR024937">
    <property type="entry name" value="Domain_X"/>
</dbReference>
<dbReference type="InterPro" id="IPR002866">
    <property type="entry name" value="Maturase_MatK"/>
</dbReference>
<dbReference type="InterPro" id="IPR024942">
    <property type="entry name" value="Maturase_MatK_N"/>
</dbReference>
<dbReference type="PANTHER" id="PTHR34811">
    <property type="entry name" value="MATURASE K"/>
    <property type="match status" value="1"/>
</dbReference>
<dbReference type="PANTHER" id="PTHR34811:SF1">
    <property type="entry name" value="MATURASE K"/>
    <property type="match status" value="1"/>
</dbReference>
<dbReference type="Pfam" id="PF01348">
    <property type="entry name" value="Intron_maturas2"/>
    <property type="match status" value="1"/>
</dbReference>
<dbReference type="Pfam" id="PF01824">
    <property type="entry name" value="MatK_N"/>
    <property type="match status" value="1"/>
</dbReference>
<sequence>MEEYQGYLELNKFRQNDFLYPLIFQEYIYALAHDQILKKCILSDNLSYDNKSSSLIVKRLITQMSQLNHLIISDNDSNQNTFLGHTKNLDYQNKMISEGFAVVVEIQFSLRLVFSLERREIVKSQNLRSIHSIFPFLEDNFLHLNYVSDILIPHPIHLEILVQTLRYWVKDASSLHLLRFFLYEYQNRTSLITSTPKKAISIVSKGNHRLFLILYNSYLCEYESIFIFICNQSSHLRSISSGTLFERIYFYGKIKNLVEVFYTDFPTVLWLFKAPFMYYVRYQGKSILASNGAPLLLNKWKYYLVNFWQCNFYLWSQPGRIHINQLSKNSLNFLGYLSSVRLNPSAVRSQMLENSFIMDNAIKKFDIIVPIIPLIRSLAKAKFCNLVGDPISKPAWADSSDSYIIDRFVRICRNIYHYHSGSSKKNCLYRVKYILRLSCARTLARKHKSTVRAFLKRLGSGLLEEFLTEDDSLIFPRTSSPLWRLYRGRVWYLDIICINDLVNHE</sequence>